<proteinExistence type="evidence at transcript level"/>
<accession>A6QNP3</accession>
<dbReference type="EMBL" id="BC148936">
    <property type="protein sequence ID" value="AAI48937.1"/>
    <property type="molecule type" value="mRNA"/>
</dbReference>
<dbReference type="RefSeq" id="NP_001096717.1">
    <property type="nucleotide sequence ID" value="NM_001103247.1"/>
</dbReference>
<dbReference type="RefSeq" id="XP_059738200.1">
    <property type="nucleotide sequence ID" value="XM_059882217.1"/>
</dbReference>
<dbReference type="RefSeq" id="XP_059738201.1">
    <property type="nucleotide sequence ID" value="XM_059882218.1"/>
</dbReference>
<dbReference type="SMR" id="A6QNP3"/>
<dbReference type="FunCoup" id="A6QNP3">
    <property type="interactions" value="127"/>
</dbReference>
<dbReference type="STRING" id="9913.ENSBTAP00000014032"/>
<dbReference type="CAZy" id="CBM21">
    <property type="family name" value="Carbohydrate-Binding Module Family 21"/>
</dbReference>
<dbReference type="PaxDb" id="9913-ENSBTAP00000014032"/>
<dbReference type="Ensembl" id="ENSBTAT00000070313.2">
    <property type="protein sequence ID" value="ENSBTAP00000058425.1"/>
    <property type="gene ID" value="ENSBTAG00000010606.6"/>
</dbReference>
<dbReference type="Ensembl" id="ENSBTAT00000120296.1">
    <property type="protein sequence ID" value="ENSBTAP00000094109.1"/>
    <property type="gene ID" value="ENSBTAG00000010606.6"/>
</dbReference>
<dbReference type="Ensembl" id="ENSBTAT00000128111.1">
    <property type="protein sequence ID" value="ENSBTAP00000092803.1"/>
    <property type="gene ID" value="ENSBTAG00000010606.6"/>
</dbReference>
<dbReference type="GeneID" id="514428"/>
<dbReference type="KEGG" id="bta:514428"/>
<dbReference type="CTD" id="79660"/>
<dbReference type="VEuPathDB" id="HostDB:ENSBTAG00000010606"/>
<dbReference type="VGNC" id="VGNC:33243">
    <property type="gene designation" value="PPP1R3B"/>
</dbReference>
<dbReference type="eggNOG" id="KOG3986">
    <property type="taxonomic scope" value="Eukaryota"/>
</dbReference>
<dbReference type="GeneTree" id="ENSGT00940000159475"/>
<dbReference type="HOGENOM" id="CLU_040215_2_1_1"/>
<dbReference type="InParanoid" id="A6QNP3"/>
<dbReference type="OrthoDB" id="8942186at2759"/>
<dbReference type="TreeFam" id="TF105537"/>
<dbReference type="Proteomes" id="UP000009136">
    <property type="component" value="Chromosome 27"/>
</dbReference>
<dbReference type="Bgee" id="ENSBTAG00000010606">
    <property type="expression patterns" value="Expressed in cardiac ventricle and 106 other cell types or tissues"/>
</dbReference>
<dbReference type="GO" id="GO:0000164">
    <property type="term" value="C:protein phosphatase type 1 complex"/>
    <property type="evidence" value="ECO:0000318"/>
    <property type="project" value="GO_Central"/>
</dbReference>
<dbReference type="GO" id="GO:2001069">
    <property type="term" value="F:glycogen binding"/>
    <property type="evidence" value="ECO:0000318"/>
    <property type="project" value="GO_Central"/>
</dbReference>
<dbReference type="GO" id="GO:0008157">
    <property type="term" value="F:protein phosphatase 1 binding"/>
    <property type="evidence" value="ECO:0000318"/>
    <property type="project" value="GO_Central"/>
</dbReference>
<dbReference type="GO" id="GO:0019888">
    <property type="term" value="F:protein phosphatase regulator activity"/>
    <property type="evidence" value="ECO:0007669"/>
    <property type="project" value="InterPro"/>
</dbReference>
<dbReference type="GO" id="GO:0005977">
    <property type="term" value="P:glycogen metabolic process"/>
    <property type="evidence" value="ECO:0007669"/>
    <property type="project" value="UniProtKB-KW"/>
</dbReference>
<dbReference type="GO" id="GO:0045818">
    <property type="term" value="P:negative regulation of glycogen catabolic process"/>
    <property type="evidence" value="ECO:0007669"/>
    <property type="project" value="Ensembl"/>
</dbReference>
<dbReference type="GO" id="GO:0045725">
    <property type="term" value="P:positive regulation of glycogen biosynthetic process"/>
    <property type="evidence" value="ECO:0007669"/>
    <property type="project" value="Ensembl"/>
</dbReference>
<dbReference type="GO" id="GO:0005979">
    <property type="term" value="P:regulation of glycogen biosynthetic process"/>
    <property type="evidence" value="ECO:0000318"/>
    <property type="project" value="GO_Central"/>
</dbReference>
<dbReference type="CDD" id="cd22814">
    <property type="entry name" value="PBD_PPP1R3B"/>
    <property type="match status" value="1"/>
</dbReference>
<dbReference type="FunFam" id="2.60.40.2440:FF:000001">
    <property type="entry name" value="Protein phosphatase 1 regulatory subunit 3C"/>
    <property type="match status" value="1"/>
</dbReference>
<dbReference type="Gene3D" id="2.60.40.2440">
    <property type="entry name" value="Carbohydrate binding type-21 domain"/>
    <property type="match status" value="1"/>
</dbReference>
<dbReference type="InterPro" id="IPR005036">
    <property type="entry name" value="CBM21_dom"/>
</dbReference>
<dbReference type="InterPro" id="IPR038175">
    <property type="entry name" value="CBM21_dom_sf"/>
</dbReference>
<dbReference type="InterPro" id="IPR017434">
    <property type="entry name" value="Pase-1_reg-su_3B/C/D_met"/>
</dbReference>
<dbReference type="InterPro" id="IPR030682">
    <property type="entry name" value="PP1_3B"/>
</dbReference>
<dbReference type="InterPro" id="IPR050782">
    <property type="entry name" value="PP1_regulatory_subunit_3"/>
</dbReference>
<dbReference type="PANTHER" id="PTHR12307">
    <property type="entry name" value="PROTEIN PHOSPHATASE 1 REGULATORY SUBUNIT"/>
    <property type="match status" value="1"/>
</dbReference>
<dbReference type="PANTHER" id="PTHR12307:SF13">
    <property type="entry name" value="PROTEIN PHOSPHATASE 1 REGULATORY SUBUNIT 3B"/>
    <property type="match status" value="1"/>
</dbReference>
<dbReference type="Pfam" id="PF03370">
    <property type="entry name" value="CBM_21"/>
    <property type="match status" value="1"/>
</dbReference>
<dbReference type="PIRSF" id="PIRSF500814">
    <property type="entry name" value="PP1_GL"/>
    <property type="match status" value="1"/>
</dbReference>
<dbReference type="PIRSF" id="PIRSF038207">
    <property type="entry name" value="PP1_GT_animal"/>
    <property type="match status" value="1"/>
</dbReference>
<dbReference type="PROSITE" id="PS51159">
    <property type="entry name" value="CBM21"/>
    <property type="match status" value="1"/>
</dbReference>
<sequence length="284" mass="32383">MAVDIECRYSCMAPSLRRERFAFQIAPKPSKPLRPCIQLSGKNEASGTVAPTVQEKKVKKRVSFADNQGLALTMVKVFSEFDDPLDIPLNITELLDSIVSLTTAESESFVLDFSQPSADYLDFRNRLQTDHVCLENCVLKDRSIAGTVKVQNLAFEKTVKVRMTFDTWKSFTDFPCWYVKDTYAGSDKDTFSFDISLPEKIQSYERMEFAVCYECNGQTYWDSNKGKNYRIIRAELQSTQGTAQPPNGPDFEIAFDQFGSPRCSYGLFPEWPSYLGYEKLGPYY</sequence>
<comment type="function">
    <text evidence="1">Acts as a glycogen-targeting subunit for phosphatase PP1. Facilitates interaction of the PP1 with enzymes of the glycogen metabolism and regulates its activity. Suppresses the rate at which PP1 dephosphorylates (inactivates) glycogen phosphorylase and enhances the rate at which it activates glycogen synthase and therefore limits glycogen breakdown. Its activity is inhibited by PYGL, resulting in inhibition of the glycogen synthase and glycogen phosphorylase phosphatase activities of PP1. Dramatically increases basal and insulin-stimulated glycogen synthesis upon overexpression in hepatocytes (By similarity).</text>
</comment>
<comment type="subunit">
    <text evidence="1">Interacts with glycogen, PPP1CC catalytic subunit of PP1 and PYGL. Associates with glycogen particles. Forms complexes with debranching enzyme, glycogen phosphorylase, glycogen synthase and phosphorylase kinase which is necessary for its regulation of PP1 activity (By similarity).</text>
</comment>
<comment type="domain">
    <text evidence="1">The N-terminal region is required for binding to PP1, the central region is required for binding to glycogen and the C-terminal region is required for binding to PYGL.</text>
</comment>
<evidence type="ECO:0000250" key="1"/>
<evidence type="ECO:0000250" key="2">
    <source>
        <dbReference type="UniProtKB" id="Q8C767"/>
    </source>
</evidence>
<evidence type="ECO:0000255" key="3">
    <source>
        <dbReference type="PROSITE-ProRule" id="PRU00491"/>
    </source>
</evidence>
<keyword id="KW-0119">Carbohydrate metabolism</keyword>
<keyword id="KW-0321">Glycogen metabolism</keyword>
<keyword id="KW-0597">Phosphoprotein</keyword>
<keyword id="KW-1185">Reference proteome</keyword>
<name>PPR3B_BOVIN</name>
<feature type="chain" id="PRO_0000324542" description="Protein phosphatase 1 regulatory subunit 3B">
    <location>
        <begin position="1"/>
        <end position="284"/>
    </location>
</feature>
<feature type="domain" description="CBM21" evidence="3">
    <location>
        <begin position="124"/>
        <end position="232"/>
    </location>
</feature>
<feature type="short sequence motif" description="PP1-binding motif">
    <location>
        <begin position="61"/>
        <end position="64"/>
    </location>
</feature>
<feature type="modified residue" description="Phosphoserine" evidence="2">
    <location>
        <position position="260"/>
    </location>
</feature>
<reference key="1">
    <citation type="submission" date="2007-07" db="EMBL/GenBank/DDBJ databases">
        <authorList>
            <consortium name="NIH - Mammalian Gene Collection (MGC) project"/>
        </authorList>
    </citation>
    <scope>NUCLEOTIDE SEQUENCE [LARGE SCALE MRNA]</scope>
    <source>
        <strain>Hereford</strain>
        <tissue>Ascending colon</tissue>
    </source>
</reference>
<organism>
    <name type="scientific">Bos taurus</name>
    <name type="common">Bovine</name>
    <dbReference type="NCBI Taxonomy" id="9913"/>
    <lineage>
        <taxon>Eukaryota</taxon>
        <taxon>Metazoa</taxon>
        <taxon>Chordata</taxon>
        <taxon>Craniata</taxon>
        <taxon>Vertebrata</taxon>
        <taxon>Euteleostomi</taxon>
        <taxon>Mammalia</taxon>
        <taxon>Eutheria</taxon>
        <taxon>Laurasiatheria</taxon>
        <taxon>Artiodactyla</taxon>
        <taxon>Ruminantia</taxon>
        <taxon>Pecora</taxon>
        <taxon>Bovidae</taxon>
        <taxon>Bovinae</taxon>
        <taxon>Bos</taxon>
    </lineage>
</organism>
<protein>
    <recommendedName>
        <fullName>Protein phosphatase 1 regulatory subunit 3B</fullName>
    </recommendedName>
</protein>
<gene>
    <name type="primary">PPP1R3B</name>
</gene>